<protein>
    <recommendedName>
        <fullName evidence="12">GEL complex subunit OPTI</fullName>
    </recommendedName>
    <alternativeName>
        <fullName evidence="9">Obligate partner of TMCO1 insertase</fullName>
    </alternativeName>
    <alternativeName>
        <fullName evidence="13">Rab5-interacting protein</fullName>
        <shortName evidence="13">RIP5</shortName>
    </alternativeName>
    <alternativeName>
        <fullName evidence="8">Respirasome Complex Assembly Factor 1</fullName>
    </alternativeName>
</protein>
<name>RCAF1_HUMAN</name>
<comment type="function">
    <text evidence="3 6">Component of the multi-pass translocon (MPT) complex that mediates insertion of multi-pass membrane proteins into the lipid bilayer of membranes (PubMed:36261522). The MPT complex takes over after the SEC61 complex: following membrane insertion of the first few transmembrane segments of proteins by the SEC61 complex, the MPT complex occludes the lateral gate of the SEC61 complex to promote insertion of subsequent transmembrane regions (PubMed:36261522). Within the MPT complex, the GEL subcomplex may mediate insertion of transmembrane regions into the membrane (PubMed:36261522). In addition to its role in multi-pass membrane insertion, RAB5IF/OPTI also acts as an assembly factor for mitochondrial respiratory complexes (PubMed:31536960).</text>
</comment>
<comment type="subunit">
    <text evidence="3 6">Component of the GET- and EMC-like (GEL) complex, composed of RAB5IF/OPTI and TMCO1 (PubMed:36261522). The GEL complex is part of the multi-pass translocon (MPT) complex, composed of three subcomplexes, the GEL complex (composed of RAB5IF/OPTI and TMCO1), the BOS complex (composed of NCLN/Nicalin, NOMO and TMEM147) and the PAT complex (composed of WDR83OS/Asterix and CCDC47) (PubMed:36261522). The MPT complex associates with the SEC61 complex (PubMed:36261522). Interacts with NDUFS3, NDUFA4, NDUFV1, NDUFA9 and NDUFS8 of the mitochondrial membrane respiratory chain NADH dehydrogenase (Complex I) (PubMed:31536960). Interacts with UQCRC2 of the ubiquinol-cytochrome c reductase complex (Complex III) (PubMed:31536960). Interacts with COX5A and COX7C of the cytochrome c oxidase complex (Complex IV) (PubMed:31536960).</text>
</comment>
<comment type="subcellular location">
    <subcellularLocation>
        <location evidence="6">Endoplasmic reticulum membrane</location>
        <topology evidence="2">Multi-pass membrane protein</topology>
    </subcellularLocation>
    <subcellularLocation>
        <location evidence="3">Mitochondrion inner membrane</location>
        <topology evidence="2">Multi-pass membrane protein</topology>
    </subcellularLocation>
</comment>
<comment type="alternative products">
    <event type="alternative splicing"/>
    <isoform>
        <id>Q9BUV8-1</id>
        <name>1</name>
        <sequence type="displayed"/>
    </isoform>
    <isoform>
        <id>Q9BUV8-2</id>
        <name>2</name>
        <sequence type="described" ref="VSP_003796"/>
    </isoform>
    <isoform>
        <id>Q9BUV8-3</id>
        <name>3</name>
        <sequence type="described" ref="VSP_003797"/>
    </isoform>
    <isoform>
        <id>Q9BUV8-4</id>
        <name>4</name>
        <sequence type="described" ref="VSP_003795"/>
    </isoform>
    <isoform>
        <id>Q9BUV8-5</id>
        <name>5</name>
        <sequence type="described" ref="VSP_047233"/>
    </isoform>
    <text>Experimental confirmation may be lacking for some isoforms.</text>
</comment>
<comment type="tissue specificity">
    <text evidence="3">Expressed in embryonic stem cells and differentiated neuronal cells.</text>
</comment>
<comment type="disease" evidence="4 5">
    <disease id="DI-06460">
        <name>Craniofacial dysmorphism, skeletal anomalies and impaired intellectual development syndrome 2</name>
        <acronym>CFSMR2</acronym>
        <description>An autosomal recessive disorder characterized by flat face, low-set ears, and cleft lip and palate, as well as costovertebral anomalies including bifid and fused ribs, vertebral segmentation defects, and scoliosis. Intellectual delay can be severe, with absent speech.</description>
        <dbReference type="MIM" id="616994"/>
    </disease>
    <text evidence="4">The disease may be caused by variants affecting the gene represented in this entry. Loss of RAB5IF in fibroblasts from a CFSMR2 patient carrying RAB5IF variant p.Trp25ter and negative for TMCO1 pathogenic variants, is associated with lack of TMCO1 expression. This suggests a possible functional relation between the two proteins and involvement in a common disease mechanism.</text>
</comment>
<comment type="miscellaneous">
    <molecule>Isoform 4</molecule>
    <text evidence="12">May be produced at very low levels due to a premature stop codon in the mRNA, leading to nonsense-mediated mRNA decay.</text>
</comment>
<comment type="similarity">
    <text evidence="12">Belongs to the EMC6 family.</text>
</comment>
<reference key="1">
    <citation type="submission" date="1998-12" db="EMBL/GenBank/DDBJ databases">
        <title>A novel gene expressed in human adrenal gland.</title>
        <authorList>
            <person name="Jiang C."/>
            <person name="Zhang C."/>
            <person name="Huang C."/>
            <person name="Peng Y."/>
            <person name="Gu Y."/>
            <person name="Zhang L."/>
            <person name="Wu T."/>
            <person name="Li Y."/>
            <person name="Han Z."/>
            <person name="Wang Y."/>
            <person name="Chen Z."/>
            <person name="Fu G."/>
        </authorList>
    </citation>
    <scope>NUCLEOTIDE SEQUENCE [MRNA] (ISOFORM 2)</scope>
    <source>
        <tissue>Adrenal gland</tissue>
    </source>
</reference>
<reference key="2">
    <citation type="submission" date="2000-06" db="EMBL/GenBank/DDBJ databases">
        <title>Human acute promyelocytic leukemia cell line NB4's apoptosis related genes.</title>
        <authorList>
            <person name="Yu W.-Q."/>
            <person name="Sun B.-Z."/>
            <person name="Chai Y.-B."/>
            <person name="Zhu F."/>
            <person name="Liu X.-S."/>
            <person name="Li Z."/>
            <person name="Lu F."/>
            <person name="Yan W."/>
            <person name="Yang H."/>
            <person name="Zhao Z.-L."/>
        </authorList>
    </citation>
    <scope>NUCLEOTIDE SEQUENCE [LARGE SCALE MRNA] (ISOFORM 3)</scope>
    <source>
        <tissue>Promyelocytic leukemia</tissue>
    </source>
</reference>
<reference key="3">
    <citation type="journal article" date="2001" name="Nature">
        <title>The DNA sequence and comparative analysis of human chromosome 20.</title>
        <authorList>
            <person name="Deloukas P."/>
            <person name="Matthews L.H."/>
            <person name="Ashurst J.L."/>
            <person name="Burton J."/>
            <person name="Gilbert J.G.R."/>
            <person name="Jones M."/>
            <person name="Stavrides G."/>
            <person name="Almeida J.P."/>
            <person name="Babbage A.K."/>
            <person name="Bagguley C.L."/>
            <person name="Bailey J."/>
            <person name="Barlow K.F."/>
            <person name="Bates K.N."/>
            <person name="Beard L.M."/>
            <person name="Beare D.M."/>
            <person name="Beasley O.P."/>
            <person name="Bird C.P."/>
            <person name="Blakey S.E."/>
            <person name="Bridgeman A.M."/>
            <person name="Brown A.J."/>
            <person name="Buck D."/>
            <person name="Burrill W.D."/>
            <person name="Butler A.P."/>
            <person name="Carder C."/>
            <person name="Carter N.P."/>
            <person name="Chapman J.C."/>
            <person name="Clamp M."/>
            <person name="Clark G."/>
            <person name="Clark L.N."/>
            <person name="Clark S.Y."/>
            <person name="Clee C.M."/>
            <person name="Clegg S."/>
            <person name="Cobley V.E."/>
            <person name="Collier R.E."/>
            <person name="Connor R.E."/>
            <person name="Corby N.R."/>
            <person name="Coulson A."/>
            <person name="Coville G.J."/>
            <person name="Deadman R."/>
            <person name="Dhami P.D."/>
            <person name="Dunn M."/>
            <person name="Ellington A.G."/>
            <person name="Frankland J.A."/>
            <person name="Fraser A."/>
            <person name="French L."/>
            <person name="Garner P."/>
            <person name="Grafham D.V."/>
            <person name="Griffiths C."/>
            <person name="Griffiths M.N.D."/>
            <person name="Gwilliam R."/>
            <person name="Hall R.E."/>
            <person name="Hammond S."/>
            <person name="Harley J.L."/>
            <person name="Heath P.D."/>
            <person name="Ho S."/>
            <person name="Holden J.L."/>
            <person name="Howden P.J."/>
            <person name="Huckle E."/>
            <person name="Hunt A.R."/>
            <person name="Hunt S.E."/>
            <person name="Jekosch K."/>
            <person name="Johnson C.M."/>
            <person name="Johnson D."/>
            <person name="Kay M.P."/>
            <person name="Kimberley A.M."/>
            <person name="King A."/>
            <person name="Knights A."/>
            <person name="Laird G.K."/>
            <person name="Lawlor S."/>
            <person name="Lehvaeslaiho M.H."/>
            <person name="Leversha M.A."/>
            <person name="Lloyd C."/>
            <person name="Lloyd D.M."/>
            <person name="Lovell J.D."/>
            <person name="Marsh V.L."/>
            <person name="Martin S.L."/>
            <person name="McConnachie L.J."/>
            <person name="McLay K."/>
            <person name="McMurray A.A."/>
            <person name="Milne S.A."/>
            <person name="Mistry D."/>
            <person name="Moore M.J.F."/>
            <person name="Mullikin J.C."/>
            <person name="Nickerson T."/>
            <person name="Oliver K."/>
            <person name="Parker A."/>
            <person name="Patel R."/>
            <person name="Pearce T.A.V."/>
            <person name="Peck A.I."/>
            <person name="Phillimore B.J.C.T."/>
            <person name="Prathalingam S.R."/>
            <person name="Plumb R.W."/>
            <person name="Ramsay H."/>
            <person name="Rice C.M."/>
            <person name="Ross M.T."/>
            <person name="Scott C.E."/>
            <person name="Sehra H.K."/>
            <person name="Shownkeen R."/>
            <person name="Sims S."/>
            <person name="Skuce C.D."/>
            <person name="Smith M.L."/>
            <person name="Soderlund C."/>
            <person name="Steward C.A."/>
            <person name="Sulston J.E."/>
            <person name="Swann R.M."/>
            <person name="Sycamore N."/>
            <person name="Taylor R."/>
            <person name="Tee L."/>
            <person name="Thomas D.W."/>
            <person name="Thorpe A."/>
            <person name="Tracey A."/>
            <person name="Tromans A.C."/>
            <person name="Vaudin M."/>
            <person name="Wall M."/>
            <person name="Wallis J.M."/>
            <person name="Whitehead S.L."/>
            <person name="Whittaker P."/>
            <person name="Willey D.L."/>
            <person name="Williams L."/>
            <person name="Williams S.A."/>
            <person name="Wilming L."/>
            <person name="Wray P.W."/>
            <person name="Hubbard T."/>
            <person name="Durbin R.M."/>
            <person name="Bentley D.R."/>
            <person name="Beck S."/>
            <person name="Rogers J."/>
        </authorList>
    </citation>
    <scope>NUCLEOTIDE SEQUENCE [LARGE SCALE GENOMIC DNA]</scope>
</reference>
<reference key="4">
    <citation type="submission" date="2005-09" db="EMBL/GenBank/DDBJ databases">
        <authorList>
            <person name="Mural R.J."/>
            <person name="Istrail S."/>
            <person name="Sutton G.G."/>
            <person name="Florea L."/>
            <person name="Halpern A.L."/>
            <person name="Mobarry C.M."/>
            <person name="Lippert R."/>
            <person name="Walenz B."/>
            <person name="Shatkay H."/>
            <person name="Dew I."/>
            <person name="Miller J.R."/>
            <person name="Flanigan M.J."/>
            <person name="Edwards N.J."/>
            <person name="Bolanos R."/>
            <person name="Fasulo D."/>
            <person name="Halldorsson B.V."/>
            <person name="Hannenhalli S."/>
            <person name="Turner R."/>
            <person name="Yooseph S."/>
            <person name="Lu F."/>
            <person name="Nusskern D.R."/>
            <person name="Shue B.C."/>
            <person name="Zheng X.H."/>
            <person name="Zhong F."/>
            <person name="Delcher A.L."/>
            <person name="Huson D.H."/>
            <person name="Kravitz S.A."/>
            <person name="Mouchard L."/>
            <person name="Reinert K."/>
            <person name="Remington K.A."/>
            <person name="Clark A.G."/>
            <person name="Waterman M.S."/>
            <person name="Eichler E.E."/>
            <person name="Adams M.D."/>
            <person name="Hunkapiller M.W."/>
            <person name="Myers E.W."/>
            <person name="Venter J.C."/>
        </authorList>
    </citation>
    <scope>NUCLEOTIDE SEQUENCE [LARGE SCALE GENOMIC DNA]</scope>
</reference>
<reference key="5">
    <citation type="journal article" date="2004" name="Genome Res.">
        <title>The status, quality, and expansion of the NIH full-length cDNA project: the Mammalian Gene Collection (MGC).</title>
        <authorList>
            <consortium name="The MGC Project Team"/>
        </authorList>
    </citation>
    <scope>NUCLEOTIDE SEQUENCE [LARGE SCALE MRNA] (ISOFORMS 1 AND 4)</scope>
    <source>
        <tissue>Lung</tissue>
        <tissue>Skin</tissue>
    </source>
</reference>
<reference key="6">
    <citation type="journal article" date="1995" name="Cold Spring Harb. Symp. Quant. Biol.">
        <title>The GDP/GTP cycle of Rab5 in the regulation of endocytotic membrane traffic.</title>
        <authorList>
            <person name="Vitale G."/>
            <person name="Alexandrov K."/>
            <person name="Ullrich O."/>
            <person name="Horiuchi H."/>
            <person name="Giner A."/>
            <person name="Dobson C."/>
            <person name="Baykova O."/>
            <person name="Gournier H."/>
            <person name="Stenmark H."/>
            <person name="Zerial M."/>
        </authorList>
    </citation>
    <scope>NUCLEOTIDE SEQUENCE [MRNA] OF 15-137 (ISOFORM 1)</scope>
</reference>
<reference key="7">
    <citation type="journal article" date="2004" name="Genome Biol.">
        <title>An unappreciated role for RNA surveillance.</title>
        <authorList>
            <person name="Hillman R.T."/>
            <person name="Green R.E."/>
            <person name="Brenner S.E."/>
        </authorList>
    </citation>
    <scope>SPLICE ISOFORM(S) THAT ARE POTENTIAL NMD TARGET(S)</scope>
</reference>
<reference key="8">
    <citation type="journal article" date="2019" name="IScience">
        <title>Rewiring of the Human Mitochondrial Interactome during Neuronal Reprogramming Reveals Regulators of the Respirasome and Neurogenesis.</title>
        <authorList>
            <person name="Moutaoufik M.T."/>
            <person name="Malty R."/>
            <person name="Amin S."/>
            <person name="Zhang Q."/>
            <person name="Phanse S."/>
            <person name="Gagarinova A."/>
            <person name="Zilocchi M."/>
            <person name="Hoell L."/>
            <person name="Minic Z."/>
            <person name="Gagarinova M."/>
            <person name="Aoki H."/>
            <person name="Stockwell J."/>
            <person name="Jessulat M."/>
            <person name="Goebels F."/>
            <person name="Broderick K."/>
            <person name="Scott N.E."/>
            <person name="Vlasblom J."/>
            <person name="Musso G."/>
            <person name="Prasad B."/>
            <person name="Lamantea E."/>
            <person name="Garavaglia B."/>
            <person name="Rajput A."/>
            <person name="Murayama K."/>
            <person name="Okazaki Y."/>
            <person name="Foster L.J."/>
            <person name="Bader G.D."/>
            <person name="Cayabyab F.S."/>
            <person name="Babu M."/>
        </authorList>
    </citation>
    <scope>IDENTIFICATION BY MASS SPECTROMETRY</scope>
    <scope>FUNCTION</scope>
    <scope>INTERACTION WITH NDUFS3; NDUFA4; NDUFV1; NDUFA9; NDUFS8; UQCRC2; COX5A AND COX7C</scope>
    <scope>SUBCELLULAR LOCATION</scope>
    <scope>TISSUE SPECIFICITY</scope>
</reference>
<reference key="9">
    <citation type="journal article" date="2022" name="Eur. J. Med. Genet.">
        <title>C20orf24: A potential novel gene responsible for Cerebrofaciothoracic Dysplasia.</title>
        <authorList>
            <person name="Isik E."/>
            <person name="Emecen D.A."/>
            <person name="Atik T."/>
            <person name="Cogulu O."/>
            <person name="Ozkinay F."/>
        </authorList>
    </citation>
    <scope>INVOLVEMENT IN CFSMR2</scope>
    <scope>VARIANT CFSMR2 25-TRP--LEU-137 DEL</scope>
</reference>
<reference key="10">
    <citation type="journal article" date="2022" name="Nature">
        <title>Defining mitochondrial protein functions through deep multiomic profiling.</title>
        <authorList>
            <person name="Rensvold J.W."/>
            <person name="Shishkova E."/>
            <person name="Sverchkov Y."/>
            <person name="Miller I.J."/>
            <person name="Cetinkaya A."/>
            <person name="Pyle A."/>
            <person name="Manicki M."/>
            <person name="Brademan D.R."/>
            <person name="Alanay Y."/>
            <person name="Raiman J."/>
            <person name="Jochem A."/>
            <person name="Hutchins P.D."/>
            <person name="Peters S.R."/>
            <person name="Linke V."/>
            <person name="Overmyer K.A."/>
            <person name="Salome A.Z."/>
            <person name="Hebert A.S."/>
            <person name="Vincent C.E."/>
            <person name="Kwiecien N.W."/>
            <person name="Rush M.J.P."/>
            <person name="Westphall M.S."/>
            <person name="Craven M."/>
            <person name="Akarsu N.A."/>
            <person name="Taylor R.W."/>
            <person name="Coon J.J."/>
            <person name="Pagliarini D.J."/>
        </authorList>
    </citation>
    <scope>INVOLVEMENT IN CFSMR2</scope>
    <scope>VARIANT CFSMR2 25-TRP--LEU-137 DEL</scope>
    <scope>CHARACTERIZATION OF VARIANT CFSMR2 25-TRP--LEU-137 DEL</scope>
</reference>
<reference key="11">
    <citation type="journal article" date="2022" name="Nature">
        <title>Substrate-driven assembly of a translocon for multipass membrane proteins.</title>
        <authorList>
            <person name="Sundaram A."/>
            <person name="Yamsek M."/>
            <person name="Zhong F."/>
            <person name="Hooda Y."/>
            <person name="Hegde R.S."/>
            <person name="Keenan R.J."/>
        </authorList>
    </citation>
    <scope>FUNCTION</scope>
    <scope>IDENTIFICATION IN THE MULTI-PASS TRANSLOCON COMPLEX</scope>
    <scope>SUBCELLULAR LOCATION</scope>
</reference>
<feature type="chain" id="PRO_0000079415" description="GEL complex subunit OPTI">
    <location>
        <begin position="1"/>
        <end position="137"/>
    </location>
</feature>
<feature type="topological domain" description="Cytoplasmic" evidence="1">
    <location>
        <begin position="1"/>
        <end position="44"/>
    </location>
</feature>
<feature type="transmembrane region" description="Helical" evidence="1">
    <location>
        <begin position="45"/>
        <end position="65"/>
    </location>
</feature>
<feature type="topological domain" description="Lumenal" evidence="1">
    <location>
        <position position="66"/>
    </location>
</feature>
<feature type="transmembrane region" description="Helical" evidence="1">
    <location>
        <begin position="67"/>
        <end position="84"/>
    </location>
</feature>
<feature type="topological domain" description="Cytoplasmic" evidence="1">
    <location>
        <begin position="85"/>
        <end position="103"/>
    </location>
</feature>
<feature type="transmembrane region" description="Helical" evidence="1">
    <location>
        <begin position="104"/>
        <end position="127"/>
    </location>
</feature>
<feature type="topological domain" description="Lumenal" evidence="1">
    <location>
        <begin position="128"/>
        <end position="137"/>
    </location>
</feature>
<feature type="splice variant" id="VSP_003795" description="In isoform 4." evidence="7">
    <original>FCLINAGVLYLYFSNYLQIDEEEYGGTWELTKEGFMTSFALFMVCVADSFTTGHLDHLLHCHPL</original>
    <variation>KGHCCSGAVCVCDD</variation>
    <location>
        <begin position="74"/>
        <end position="137"/>
    </location>
</feature>
<feature type="splice variant" id="VSP_047233" description="In isoform 5." evidence="12">
    <original>FCLINAGVLYLYFSNYLQIDEEEYGGTWELTKEGFMTSFALFMVCVADSFTTGHLDHLLHCHPL</original>
    <variation>SFGSSFTLPSIMTDGVQLPSAPYPVQRTLLITAQELDRWGTPAPWNLEDPCFLDRESVCWASVFSARVVT</variation>
    <location>
        <begin position="74"/>
        <end position="137"/>
    </location>
</feature>
<feature type="splice variant" id="VSP_003796" description="In isoform 2." evidence="10">
    <original>CVADSFTTGHLDHLLHCHPL</original>
    <variation>IWIIFYTAIHYD</variation>
    <location>
        <begin position="118"/>
        <end position="137"/>
    </location>
</feature>
<feature type="splice variant" id="VSP_003797" description="In isoform 3." evidence="11">
    <original>CVADSFTTGH</original>
    <variation>I</variation>
    <location>
        <begin position="118"/>
        <end position="127"/>
    </location>
</feature>
<feature type="sequence variant" id="VAR_087487" description="In CFSMR2; no RAB5IF protein detected by Western blot in patient fibroblasts." evidence="4 5">
    <location>
        <begin position="25"/>
        <end position="137"/>
    </location>
</feature>
<feature type="sequence conflict" description="In Ref. 6; AAB50849." evidence="12" ref="6">
    <original>LANGALKVSVWSKVLRSDA</original>
    <variation>PWANGASKSPSGVRCCGRR</variation>
    <location>
        <begin position="15"/>
        <end position="33"/>
    </location>
</feature>
<feature type="sequence conflict" description="In Ref. 2; AAK07515." evidence="12" ref="2">
    <original>EEYGGT</original>
    <variation>GRILVAR</variation>
    <location>
        <begin position="95"/>
        <end position="100"/>
    </location>
</feature>
<feature type="sequence conflict" description="In Ref. 6; AAB50849." evidence="12" ref="6">
    <original>T</original>
    <variation>Q</variation>
    <location>
        <position position="100"/>
    </location>
</feature>
<feature type="sequence conflict" description="In Ref. 6; AAB50849." evidence="12" ref="6">
    <original>T</original>
    <variation>P</variation>
    <location>
        <position position="110"/>
    </location>
</feature>
<feature type="sequence conflict" description="In Ref. 6; AAB50849." evidence="12" ref="6">
    <original>LFMVCVADSFTTGHLDHLLHCHPL</original>
    <variation>IVHGHLLLLFTSHPYSMMVSDSK</variation>
    <location>
        <begin position="114"/>
        <end position="137"/>
    </location>
</feature>
<feature type="sequence conflict" description="In Ref. 2; AAK07515." evidence="12" ref="2">
    <original>L</original>
    <variation>FIT</variation>
    <location>
        <position position="137"/>
    </location>
</feature>
<organism>
    <name type="scientific">Homo sapiens</name>
    <name type="common">Human</name>
    <dbReference type="NCBI Taxonomy" id="9606"/>
    <lineage>
        <taxon>Eukaryota</taxon>
        <taxon>Metazoa</taxon>
        <taxon>Chordata</taxon>
        <taxon>Craniata</taxon>
        <taxon>Vertebrata</taxon>
        <taxon>Euteleostomi</taxon>
        <taxon>Mammalia</taxon>
        <taxon>Eutheria</taxon>
        <taxon>Euarchontoglires</taxon>
        <taxon>Primates</taxon>
        <taxon>Haplorrhini</taxon>
        <taxon>Catarrhini</taxon>
        <taxon>Hominidae</taxon>
        <taxon>Homo</taxon>
    </lineage>
</organism>
<keyword id="KW-0025">Alternative splicing</keyword>
<keyword id="KW-0225">Disease variant</keyword>
<keyword id="KW-0256">Endoplasmic reticulum</keyword>
<keyword id="KW-0991">Intellectual disability</keyword>
<keyword id="KW-0472">Membrane</keyword>
<keyword id="KW-0496">Mitochondrion</keyword>
<keyword id="KW-0999">Mitochondrion inner membrane</keyword>
<keyword id="KW-1267">Proteomics identification</keyword>
<keyword id="KW-1185">Reference proteome</keyword>
<keyword id="KW-0812">Transmembrane</keyword>
<keyword id="KW-1133">Transmembrane helix</keyword>
<proteinExistence type="evidence at protein level"/>
<accession>Q9BUV8</accession>
<accession>E1P5U0</accession>
<accession>O00605</accession>
<accession>Q5QPG6</accession>
<accession>Q5QPG7</accession>
<accession>Q9BT03</accession>
<accession>Q9BZU7</accession>
<accession>Q9UI05</accession>
<dbReference type="EMBL" id="AF112213">
    <property type="protein sequence ID" value="AAF17201.1"/>
    <property type="molecule type" value="mRNA"/>
</dbReference>
<dbReference type="EMBL" id="AF274936">
    <property type="protein sequence ID" value="AAK07515.1"/>
    <property type="molecule type" value="mRNA"/>
</dbReference>
<dbReference type="EMBL" id="AL050318">
    <property type="status" value="NOT_ANNOTATED_CDS"/>
    <property type="molecule type" value="Genomic_DNA"/>
</dbReference>
<dbReference type="EMBL" id="CH471077">
    <property type="protein sequence ID" value="EAW76122.1"/>
    <property type="molecule type" value="Genomic_DNA"/>
</dbReference>
<dbReference type="EMBL" id="CH471077">
    <property type="protein sequence ID" value="EAW76120.1"/>
    <property type="molecule type" value="Genomic_DNA"/>
</dbReference>
<dbReference type="EMBL" id="CH471077">
    <property type="protein sequence ID" value="EAW76123.1"/>
    <property type="molecule type" value="Genomic_DNA"/>
</dbReference>
<dbReference type="EMBL" id="CH471077">
    <property type="protein sequence ID" value="EAW76124.1"/>
    <property type="molecule type" value="Genomic_DNA"/>
</dbReference>
<dbReference type="EMBL" id="BC001871">
    <property type="protein sequence ID" value="AAH01871.1"/>
    <property type="molecule type" value="mRNA"/>
</dbReference>
<dbReference type="EMBL" id="BC004446">
    <property type="protein sequence ID" value="AAH04446.1"/>
    <property type="molecule type" value="mRNA"/>
</dbReference>
<dbReference type="EMBL" id="S83364">
    <property type="protein sequence ID" value="AAB50849.1"/>
    <property type="molecule type" value="mRNA"/>
</dbReference>
<dbReference type="CCDS" id="CCDS13279.1">
    <molecule id="Q9BUV8-5"/>
</dbReference>
<dbReference type="CCDS" id="CCDS13280.1">
    <molecule id="Q9BUV8-2"/>
</dbReference>
<dbReference type="CCDS" id="CCDS56190.1">
    <molecule id="Q9BUV8-1"/>
</dbReference>
<dbReference type="RefSeq" id="NP_001186463.1">
    <molecule id="Q9BUV8-1"/>
    <property type="nucleotide sequence ID" value="NM_001199534.2"/>
</dbReference>
<dbReference type="RefSeq" id="NP_061328.1">
    <molecule id="Q9BUV8-2"/>
    <property type="nucleotide sequence ID" value="NM_018840.5"/>
</dbReference>
<dbReference type="RefSeq" id="NP_955777.1">
    <molecule id="Q9BUV8-5"/>
    <property type="nucleotide sequence ID" value="NM_199483.3"/>
</dbReference>
<dbReference type="SMR" id="Q9BUV8"/>
<dbReference type="BioGRID" id="121015">
    <property type="interactions" value="104"/>
</dbReference>
<dbReference type="ComplexPortal" id="CPX-5606">
    <property type="entry name" value="GEL multi-spanning membrane protein insertion complex"/>
</dbReference>
<dbReference type="CORUM" id="Q9BUV8"/>
<dbReference type="FunCoup" id="Q9BUV8">
    <property type="interactions" value="1513"/>
</dbReference>
<dbReference type="IntAct" id="Q9BUV8">
    <property type="interactions" value="25"/>
</dbReference>
<dbReference type="MINT" id="Q9BUV8"/>
<dbReference type="STRING" id="9606.ENSP00000454021"/>
<dbReference type="GlyGen" id="Q9BUV8">
    <property type="glycosylation" value="1 site, 1 O-linked glycan (1 site)"/>
</dbReference>
<dbReference type="iPTMnet" id="Q9BUV8"/>
<dbReference type="PhosphoSitePlus" id="Q9BUV8"/>
<dbReference type="BioMuta" id="C20orf24"/>
<dbReference type="DMDM" id="24211596"/>
<dbReference type="jPOST" id="Q9BUV8"/>
<dbReference type="MassIVE" id="Q9BUV8"/>
<dbReference type="PaxDb" id="9606-ENSP00000341213"/>
<dbReference type="PeptideAtlas" id="Q9BUV8"/>
<dbReference type="ProteomicsDB" id="63658"/>
<dbReference type="ProteomicsDB" id="79136">
    <molecule id="Q9BUV8-1"/>
</dbReference>
<dbReference type="ProteomicsDB" id="79137">
    <molecule id="Q9BUV8-2"/>
</dbReference>
<dbReference type="ProteomicsDB" id="79138">
    <molecule id="Q9BUV8-3"/>
</dbReference>
<dbReference type="ProteomicsDB" id="79139">
    <molecule id="Q9BUV8-4"/>
</dbReference>
<dbReference type="Pumba" id="Q9BUV8"/>
<dbReference type="TopDownProteomics" id="Q9BUV8-2">
    <molecule id="Q9BUV8-2"/>
</dbReference>
<dbReference type="TopDownProteomics" id="Q9BUV8-4">
    <molecule id="Q9BUV8-4"/>
</dbReference>
<dbReference type="Antibodypedia" id="26537">
    <property type="antibodies" value="32 antibodies from 11 providers"/>
</dbReference>
<dbReference type="DNASU" id="55969"/>
<dbReference type="Ensembl" id="ENST00000342422.3">
    <molecule id="Q9BUV8-5"/>
    <property type="protein sequence ID" value="ENSP00000341213.3"/>
    <property type="gene ID" value="ENSG00000101084.19"/>
</dbReference>
<dbReference type="Ensembl" id="ENST00000344795.8">
    <molecule id="Q9BUV8-2"/>
    <property type="protein sequence ID" value="ENSP00000340164.3"/>
    <property type="gene ID" value="ENSG00000101084.19"/>
</dbReference>
<dbReference type="Ensembl" id="ENST00000373852.9">
    <molecule id="Q9BUV8-1"/>
    <property type="protein sequence ID" value="ENSP00000362958.5"/>
    <property type="gene ID" value="ENSG00000101084.19"/>
</dbReference>
<dbReference type="Ensembl" id="ENST00000483815.5">
    <molecule id="Q9BUV8-4"/>
    <property type="protein sequence ID" value="ENSP00000432510.1"/>
    <property type="gene ID" value="ENSG00000101084.19"/>
</dbReference>
<dbReference type="Ensembl" id="ENST00000492721.5">
    <molecule id="Q9BUV8-4"/>
    <property type="protein sequence ID" value="ENSP00000435871.1"/>
    <property type="gene ID" value="ENSG00000101084.19"/>
</dbReference>
<dbReference type="GeneID" id="55969"/>
<dbReference type="KEGG" id="hsa:55969"/>
<dbReference type="MANE-Select" id="ENST00000344795.8">
    <molecule id="Q9BUV8-2"/>
    <property type="protein sequence ID" value="ENSP00000340164.3"/>
    <property type="RefSeq nucleotide sequence ID" value="NM_018840.5"/>
    <property type="RefSeq protein sequence ID" value="NP_061328.1"/>
</dbReference>
<dbReference type="UCSC" id="uc002xfq.3">
    <molecule id="Q9BUV8-1"/>
    <property type="organism name" value="human"/>
</dbReference>
<dbReference type="AGR" id="HGNC:15870"/>
<dbReference type="CTD" id="55969"/>
<dbReference type="DisGeNET" id="55969"/>
<dbReference type="GeneCards" id="RAB5IF"/>
<dbReference type="HGNC" id="HGNC:15870">
    <property type="gene designation" value="RAB5IF"/>
</dbReference>
<dbReference type="HPA" id="ENSG00000101084">
    <property type="expression patterns" value="Tissue enhanced (skeletal)"/>
</dbReference>
<dbReference type="MalaCards" id="RAB5IF"/>
<dbReference type="MIM" id="616994">
    <property type="type" value="phenotype"/>
</dbReference>
<dbReference type="MIM" id="619960">
    <property type="type" value="gene"/>
</dbReference>
<dbReference type="neXtProt" id="NX_Q9BUV8"/>
<dbReference type="OpenTargets" id="ENSG00000101084"/>
<dbReference type="PharmGKB" id="PA25740"/>
<dbReference type="VEuPathDB" id="HostDB:ENSG00000101084"/>
<dbReference type="eggNOG" id="KOG3415">
    <property type="taxonomic scope" value="Eukaryota"/>
</dbReference>
<dbReference type="GeneTree" id="ENSGT00390000004786"/>
<dbReference type="HOGENOM" id="CLU_120704_1_0_1"/>
<dbReference type="InParanoid" id="Q9BUV8"/>
<dbReference type="OMA" id="ANSEWPD"/>
<dbReference type="OrthoDB" id="286395at2759"/>
<dbReference type="PAN-GO" id="Q9BUV8">
    <property type="GO annotations" value="0 GO annotations based on evolutionary models"/>
</dbReference>
<dbReference type="PhylomeDB" id="Q9BUV8"/>
<dbReference type="PathwayCommons" id="Q9BUV8"/>
<dbReference type="Reactome" id="R-HSA-9864848">
    <property type="pathway name" value="Complex IV assembly"/>
</dbReference>
<dbReference type="SignaLink" id="Q9BUV8"/>
<dbReference type="BioGRID-ORCS" id="55969">
    <property type="hits" value="24 hits in 1137 CRISPR screens"/>
</dbReference>
<dbReference type="ChiTaRS" id="C20orf24">
    <property type="organism name" value="human"/>
</dbReference>
<dbReference type="GenomeRNAi" id="55969"/>
<dbReference type="Pharos" id="Q9BUV8">
    <property type="development level" value="Tdark"/>
</dbReference>
<dbReference type="PRO" id="PR:Q9BUV8"/>
<dbReference type="Proteomes" id="UP000005640">
    <property type="component" value="Chromosome 20"/>
</dbReference>
<dbReference type="RNAct" id="Q9BUV8">
    <property type="molecule type" value="protein"/>
</dbReference>
<dbReference type="Bgee" id="ENSG00000101084">
    <property type="expression patterns" value="Expressed in lower esophagus mucosa and 99 other cell types or tissues"/>
</dbReference>
<dbReference type="ExpressionAtlas" id="Q9BUV8">
    <property type="expression patterns" value="baseline and differential"/>
</dbReference>
<dbReference type="GO" id="GO:0005789">
    <property type="term" value="C:endoplasmic reticulum membrane"/>
    <property type="evidence" value="ECO:0007669"/>
    <property type="project" value="UniProtKB-SubCell"/>
</dbReference>
<dbReference type="GO" id="GO:0005743">
    <property type="term" value="C:mitochondrial inner membrane"/>
    <property type="evidence" value="ECO:0007669"/>
    <property type="project" value="UniProtKB-SubCell"/>
</dbReference>
<dbReference type="GO" id="GO:0005739">
    <property type="term" value="C:mitochondrion"/>
    <property type="evidence" value="ECO:0000315"/>
    <property type="project" value="UniProtKB"/>
</dbReference>
<dbReference type="GO" id="GO:0160064">
    <property type="term" value="C:multi-pass translocon complex"/>
    <property type="evidence" value="ECO:0000314"/>
    <property type="project" value="UniProtKB"/>
</dbReference>
<dbReference type="GO" id="GO:0097250">
    <property type="term" value="P:mitochondrial respirasome assembly"/>
    <property type="evidence" value="ECO:0000315"/>
    <property type="project" value="UniProtKB"/>
</dbReference>
<dbReference type="GO" id="GO:0160063">
    <property type="term" value="P:multi-pass transmembrane protein insertion into ER membrane"/>
    <property type="evidence" value="ECO:0000314"/>
    <property type="project" value="UniProtKB"/>
</dbReference>
<dbReference type="InterPro" id="IPR029008">
    <property type="entry name" value="EMC6-like"/>
</dbReference>
<dbReference type="InterPro" id="IPR010742">
    <property type="entry name" value="RCAF1"/>
</dbReference>
<dbReference type="PANTHER" id="PTHR12906:SF0">
    <property type="entry name" value="GEL COMPLEX SUBUNIT OPTI"/>
    <property type="match status" value="1"/>
</dbReference>
<dbReference type="PANTHER" id="PTHR12906">
    <property type="entry name" value="PROTEIN C20ORF24 RAB5-INTERACTING PROTEIN"/>
    <property type="match status" value="1"/>
</dbReference>
<dbReference type="Pfam" id="PF07019">
    <property type="entry name" value="EMC6"/>
    <property type="match status" value="1"/>
</dbReference>
<gene>
    <name evidence="13" type="primary">RAB5IF</name>
    <name evidence="13" type="synonym">C20orf24</name>
    <name evidence="9" type="synonym">OPTI</name>
    <name evidence="8" type="synonym">RCAF1</name>
    <name type="ORF">PNAS-11</name>
</gene>
<sequence length="137" mass="15487">MSGGRRKEEPPQPQLANGALKVSVWSKVLRSDAAWEDKDEFLDVIYWFRQIIAVVLGVIWGVLPLRGFLGIAGFCLINAGVLYLYFSNYLQIDEEEYGGTWELTKEGFMTSFALFMVCVADSFTTGHLDHLLHCHPL</sequence>
<evidence type="ECO:0000250" key="1">
    <source>
        <dbReference type="UniProtKB" id="A0A8I3S9V6"/>
    </source>
</evidence>
<evidence type="ECO:0000255" key="2"/>
<evidence type="ECO:0000269" key="3">
    <source>
    </source>
</evidence>
<evidence type="ECO:0000269" key="4">
    <source>
    </source>
</evidence>
<evidence type="ECO:0000269" key="5">
    <source>
    </source>
</evidence>
<evidence type="ECO:0000269" key="6">
    <source>
    </source>
</evidence>
<evidence type="ECO:0000303" key="7">
    <source>
    </source>
</evidence>
<evidence type="ECO:0000303" key="8">
    <source>
    </source>
</evidence>
<evidence type="ECO:0000303" key="9">
    <source>
    </source>
</evidence>
<evidence type="ECO:0000303" key="10">
    <source ref="1"/>
</evidence>
<evidence type="ECO:0000303" key="11">
    <source ref="2"/>
</evidence>
<evidence type="ECO:0000305" key="12"/>
<evidence type="ECO:0000312" key="13">
    <source>
        <dbReference type="HGNC" id="HGNC:15870"/>
    </source>
</evidence>